<dbReference type="EC" id="2.6.1.52" evidence="1"/>
<dbReference type="EMBL" id="CP001396">
    <property type="protein sequence ID" value="ACR61835.1"/>
    <property type="molecule type" value="Genomic_DNA"/>
</dbReference>
<dbReference type="RefSeq" id="WP_000057138.1">
    <property type="nucleotide sequence ID" value="NC_012759.1"/>
</dbReference>
<dbReference type="SMR" id="C4ZQ33"/>
<dbReference type="KEGG" id="ebw:BWG_0759"/>
<dbReference type="HOGENOM" id="CLU_034866_0_2_6"/>
<dbReference type="UniPathway" id="UPA00135">
    <property type="reaction ID" value="UER00197"/>
</dbReference>
<dbReference type="UniPathway" id="UPA00244">
    <property type="reaction ID" value="UER00311"/>
</dbReference>
<dbReference type="GO" id="GO:0005737">
    <property type="term" value="C:cytoplasm"/>
    <property type="evidence" value="ECO:0007669"/>
    <property type="project" value="UniProtKB-SubCell"/>
</dbReference>
<dbReference type="GO" id="GO:0004648">
    <property type="term" value="F:O-phospho-L-serine:2-oxoglutarate aminotransferase activity"/>
    <property type="evidence" value="ECO:0007669"/>
    <property type="project" value="UniProtKB-UniRule"/>
</dbReference>
<dbReference type="GO" id="GO:0030170">
    <property type="term" value="F:pyridoxal phosphate binding"/>
    <property type="evidence" value="ECO:0007669"/>
    <property type="project" value="UniProtKB-UniRule"/>
</dbReference>
<dbReference type="GO" id="GO:0006564">
    <property type="term" value="P:L-serine biosynthetic process"/>
    <property type="evidence" value="ECO:0007669"/>
    <property type="project" value="UniProtKB-UniRule"/>
</dbReference>
<dbReference type="GO" id="GO:0008615">
    <property type="term" value="P:pyridoxine biosynthetic process"/>
    <property type="evidence" value="ECO:0007669"/>
    <property type="project" value="UniProtKB-UniRule"/>
</dbReference>
<dbReference type="CDD" id="cd00611">
    <property type="entry name" value="PSAT_like"/>
    <property type="match status" value="1"/>
</dbReference>
<dbReference type="FunFam" id="3.40.640.10:FF:000010">
    <property type="entry name" value="Phosphoserine aminotransferase"/>
    <property type="match status" value="1"/>
</dbReference>
<dbReference type="FunFam" id="3.90.1150.10:FF:000006">
    <property type="entry name" value="Phosphoserine aminotransferase"/>
    <property type="match status" value="1"/>
</dbReference>
<dbReference type="Gene3D" id="3.90.1150.10">
    <property type="entry name" value="Aspartate Aminotransferase, domain 1"/>
    <property type="match status" value="1"/>
</dbReference>
<dbReference type="Gene3D" id="3.40.640.10">
    <property type="entry name" value="Type I PLP-dependent aspartate aminotransferase-like (Major domain)"/>
    <property type="match status" value="1"/>
</dbReference>
<dbReference type="HAMAP" id="MF_00160">
    <property type="entry name" value="SerC_aminotrans_5"/>
    <property type="match status" value="1"/>
</dbReference>
<dbReference type="InterPro" id="IPR000192">
    <property type="entry name" value="Aminotrans_V_dom"/>
</dbReference>
<dbReference type="InterPro" id="IPR020578">
    <property type="entry name" value="Aminotrans_V_PyrdxlP_BS"/>
</dbReference>
<dbReference type="InterPro" id="IPR022278">
    <property type="entry name" value="Pser_aminoTfrase"/>
</dbReference>
<dbReference type="InterPro" id="IPR015424">
    <property type="entry name" value="PyrdxlP-dep_Trfase"/>
</dbReference>
<dbReference type="InterPro" id="IPR015421">
    <property type="entry name" value="PyrdxlP-dep_Trfase_major"/>
</dbReference>
<dbReference type="InterPro" id="IPR015422">
    <property type="entry name" value="PyrdxlP-dep_Trfase_small"/>
</dbReference>
<dbReference type="NCBIfam" id="NF003764">
    <property type="entry name" value="PRK05355.1"/>
    <property type="match status" value="1"/>
</dbReference>
<dbReference type="NCBIfam" id="TIGR01364">
    <property type="entry name" value="serC_1"/>
    <property type="match status" value="1"/>
</dbReference>
<dbReference type="PANTHER" id="PTHR43247">
    <property type="entry name" value="PHOSPHOSERINE AMINOTRANSFERASE"/>
    <property type="match status" value="1"/>
</dbReference>
<dbReference type="PANTHER" id="PTHR43247:SF1">
    <property type="entry name" value="PHOSPHOSERINE AMINOTRANSFERASE"/>
    <property type="match status" value="1"/>
</dbReference>
<dbReference type="Pfam" id="PF00266">
    <property type="entry name" value="Aminotran_5"/>
    <property type="match status" value="1"/>
</dbReference>
<dbReference type="PIRSF" id="PIRSF000525">
    <property type="entry name" value="SerC"/>
    <property type="match status" value="1"/>
</dbReference>
<dbReference type="SUPFAM" id="SSF53383">
    <property type="entry name" value="PLP-dependent transferases"/>
    <property type="match status" value="1"/>
</dbReference>
<dbReference type="PROSITE" id="PS00595">
    <property type="entry name" value="AA_TRANSFER_CLASS_5"/>
    <property type="match status" value="1"/>
</dbReference>
<sequence>MAQIFNFSSGPAMLPAEVLKQAQQELRDWNGLGTSVMEVSHRGKEFIQVAEEAEKDFRDLLNVPSNYKVLFCHGGGRGQFAAVPLNILGDKTTADYVDAGYWAASAIKEAKKYCTPNVFDAKVTVDGLRAVKPMREWQLSDNAAYMHYCPNETIDGIAIDETPDFGADVVVAADFSSTILSRPIDVSRYGVIYAGAQKNIGPAGLTIVIVREDLLGKANIACPSILDYSILNDNGSMFNTPPTFAWYLSGLVFKWLKANGGVAEMDKINQQKAELLYGVIDNSDFYRNDVAKANRSRMNVPFQLADSALDKLFLEESFAAGLHALKGHRVVGGMRASIYNAMPLEGVKALTDFMVEFERRHG</sequence>
<name>SERC_ECOBW</name>
<proteinExistence type="inferred from homology"/>
<evidence type="ECO:0000255" key="1">
    <source>
        <dbReference type="HAMAP-Rule" id="MF_00160"/>
    </source>
</evidence>
<comment type="function">
    <text evidence="1">Catalyzes the reversible conversion of 3-phosphohydroxypyruvate to phosphoserine and of 3-hydroxy-2-oxo-4-phosphonooxybutanoate to phosphohydroxythreonine.</text>
</comment>
<comment type="catalytic activity">
    <reaction evidence="1">
        <text>O-phospho-L-serine + 2-oxoglutarate = 3-phosphooxypyruvate + L-glutamate</text>
        <dbReference type="Rhea" id="RHEA:14329"/>
        <dbReference type="ChEBI" id="CHEBI:16810"/>
        <dbReference type="ChEBI" id="CHEBI:18110"/>
        <dbReference type="ChEBI" id="CHEBI:29985"/>
        <dbReference type="ChEBI" id="CHEBI:57524"/>
        <dbReference type="EC" id="2.6.1.52"/>
    </reaction>
</comment>
<comment type="catalytic activity">
    <reaction evidence="1">
        <text>4-(phosphooxy)-L-threonine + 2-oxoglutarate = (R)-3-hydroxy-2-oxo-4-phosphooxybutanoate + L-glutamate</text>
        <dbReference type="Rhea" id="RHEA:16573"/>
        <dbReference type="ChEBI" id="CHEBI:16810"/>
        <dbReference type="ChEBI" id="CHEBI:29985"/>
        <dbReference type="ChEBI" id="CHEBI:58452"/>
        <dbReference type="ChEBI" id="CHEBI:58538"/>
        <dbReference type="EC" id="2.6.1.52"/>
    </reaction>
</comment>
<comment type="cofactor">
    <cofactor evidence="1">
        <name>pyridoxal 5'-phosphate</name>
        <dbReference type="ChEBI" id="CHEBI:597326"/>
    </cofactor>
    <text evidence="1">Binds 1 pyridoxal phosphate per subunit.</text>
</comment>
<comment type="pathway">
    <text evidence="1">Amino-acid biosynthesis; L-serine biosynthesis; L-serine from 3-phospho-D-glycerate: step 2/3.</text>
</comment>
<comment type="pathway">
    <text evidence="1">Cofactor biosynthesis; pyridoxine 5'-phosphate biosynthesis; pyridoxine 5'-phosphate from D-erythrose 4-phosphate: step 3/5.</text>
</comment>
<comment type="subunit">
    <text evidence="1">Homodimer.</text>
</comment>
<comment type="subcellular location">
    <subcellularLocation>
        <location evidence="1">Cytoplasm</location>
    </subcellularLocation>
</comment>
<comment type="similarity">
    <text evidence="1">Belongs to the class-V pyridoxal-phosphate-dependent aminotransferase family. SerC subfamily.</text>
</comment>
<protein>
    <recommendedName>
        <fullName evidence="1">Phosphoserine aminotransferase</fullName>
        <ecNumber evidence="1">2.6.1.52</ecNumber>
    </recommendedName>
    <alternativeName>
        <fullName evidence="1">Phosphohydroxythreonine aminotransferase</fullName>
        <shortName evidence="1">PSAT</shortName>
    </alternativeName>
</protein>
<organism>
    <name type="scientific">Escherichia coli (strain K12 / MC4100 / BW2952)</name>
    <dbReference type="NCBI Taxonomy" id="595496"/>
    <lineage>
        <taxon>Bacteria</taxon>
        <taxon>Pseudomonadati</taxon>
        <taxon>Pseudomonadota</taxon>
        <taxon>Gammaproteobacteria</taxon>
        <taxon>Enterobacterales</taxon>
        <taxon>Enterobacteriaceae</taxon>
        <taxon>Escherichia</taxon>
    </lineage>
</organism>
<keyword id="KW-0028">Amino-acid biosynthesis</keyword>
<keyword id="KW-0032">Aminotransferase</keyword>
<keyword id="KW-0963">Cytoplasm</keyword>
<keyword id="KW-0663">Pyridoxal phosphate</keyword>
<keyword id="KW-0664">Pyridoxine biosynthesis</keyword>
<keyword id="KW-0718">Serine biosynthesis</keyword>
<keyword id="KW-0808">Transferase</keyword>
<feature type="chain" id="PRO_1000203526" description="Phosphoserine aminotransferase">
    <location>
        <begin position="1"/>
        <end position="362"/>
    </location>
</feature>
<feature type="binding site" evidence="1">
    <location>
        <position position="9"/>
    </location>
    <ligand>
        <name>L-glutamate</name>
        <dbReference type="ChEBI" id="CHEBI:29985"/>
    </ligand>
</feature>
<feature type="binding site" evidence="1">
    <location>
        <position position="42"/>
    </location>
    <ligand>
        <name>L-glutamate</name>
        <dbReference type="ChEBI" id="CHEBI:29985"/>
    </ligand>
</feature>
<feature type="binding site" evidence="1">
    <location>
        <begin position="76"/>
        <end position="77"/>
    </location>
    <ligand>
        <name>pyridoxal 5'-phosphate</name>
        <dbReference type="ChEBI" id="CHEBI:597326"/>
    </ligand>
</feature>
<feature type="binding site" evidence="1">
    <location>
        <position position="102"/>
    </location>
    <ligand>
        <name>pyridoxal 5'-phosphate</name>
        <dbReference type="ChEBI" id="CHEBI:597326"/>
    </ligand>
</feature>
<feature type="binding site" evidence="1">
    <location>
        <position position="153"/>
    </location>
    <ligand>
        <name>pyridoxal 5'-phosphate</name>
        <dbReference type="ChEBI" id="CHEBI:597326"/>
    </ligand>
</feature>
<feature type="binding site" evidence="1">
    <location>
        <position position="174"/>
    </location>
    <ligand>
        <name>pyridoxal 5'-phosphate</name>
        <dbReference type="ChEBI" id="CHEBI:597326"/>
    </ligand>
</feature>
<feature type="binding site" evidence="1">
    <location>
        <position position="197"/>
    </location>
    <ligand>
        <name>pyridoxal 5'-phosphate</name>
        <dbReference type="ChEBI" id="CHEBI:597326"/>
    </ligand>
</feature>
<feature type="binding site" evidence="1">
    <location>
        <begin position="239"/>
        <end position="240"/>
    </location>
    <ligand>
        <name>pyridoxal 5'-phosphate</name>
        <dbReference type="ChEBI" id="CHEBI:597326"/>
    </ligand>
</feature>
<feature type="modified residue" description="N6-(pyridoxal phosphate)lysine" evidence="1">
    <location>
        <position position="198"/>
    </location>
</feature>
<reference key="1">
    <citation type="journal article" date="2009" name="J. Bacteriol.">
        <title>Genomic sequencing reveals regulatory mutations and recombinational events in the widely used MC4100 lineage of Escherichia coli K-12.</title>
        <authorList>
            <person name="Ferenci T."/>
            <person name="Zhou Z."/>
            <person name="Betteridge T."/>
            <person name="Ren Y."/>
            <person name="Liu Y."/>
            <person name="Feng L."/>
            <person name="Reeves P.R."/>
            <person name="Wang L."/>
        </authorList>
    </citation>
    <scope>NUCLEOTIDE SEQUENCE [LARGE SCALE GENOMIC DNA]</scope>
    <source>
        <strain>K12 / MC4100 / BW2952</strain>
    </source>
</reference>
<accession>C4ZQ33</accession>
<gene>
    <name evidence="1" type="primary">serC</name>
    <name type="ordered locus">BWG_0759</name>
</gene>